<name>RL28_PSEP1</name>
<evidence type="ECO:0000255" key="1">
    <source>
        <dbReference type="HAMAP-Rule" id="MF_00373"/>
    </source>
</evidence>
<evidence type="ECO:0000256" key="2">
    <source>
        <dbReference type="SAM" id="MobiDB-lite"/>
    </source>
</evidence>
<evidence type="ECO:0000305" key="3"/>
<keyword id="KW-0687">Ribonucleoprotein</keyword>
<keyword id="KW-0689">Ribosomal protein</keyword>
<organism>
    <name type="scientific">Pseudomonas putida (strain ATCC 700007 / DSM 6899 / JCM 31910 / BCRC 17059 / LMG 24140 / F1)</name>
    <dbReference type="NCBI Taxonomy" id="351746"/>
    <lineage>
        <taxon>Bacteria</taxon>
        <taxon>Pseudomonadati</taxon>
        <taxon>Pseudomonadota</taxon>
        <taxon>Gammaproteobacteria</taxon>
        <taxon>Pseudomonadales</taxon>
        <taxon>Pseudomonadaceae</taxon>
        <taxon>Pseudomonas</taxon>
    </lineage>
</organism>
<protein>
    <recommendedName>
        <fullName evidence="1">Large ribosomal subunit protein bL28</fullName>
    </recommendedName>
    <alternativeName>
        <fullName evidence="3">50S ribosomal protein L28</fullName>
    </alternativeName>
</protein>
<reference key="1">
    <citation type="submission" date="2007-05" db="EMBL/GenBank/DDBJ databases">
        <title>Complete sequence of Pseudomonas putida F1.</title>
        <authorList>
            <consortium name="US DOE Joint Genome Institute"/>
            <person name="Copeland A."/>
            <person name="Lucas S."/>
            <person name="Lapidus A."/>
            <person name="Barry K."/>
            <person name="Detter J.C."/>
            <person name="Glavina del Rio T."/>
            <person name="Hammon N."/>
            <person name="Israni S."/>
            <person name="Dalin E."/>
            <person name="Tice H."/>
            <person name="Pitluck S."/>
            <person name="Chain P."/>
            <person name="Malfatti S."/>
            <person name="Shin M."/>
            <person name="Vergez L."/>
            <person name="Schmutz J."/>
            <person name="Larimer F."/>
            <person name="Land M."/>
            <person name="Hauser L."/>
            <person name="Kyrpides N."/>
            <person name="Lykidis A."/>
            <person name="Parales R."/>
            <person name="Richardson P."/>
        </authorList>
    </citation>
    <scope>NUCLEOTIDE SEQUENCE [LARGE SCALE GENOMIC DNA]</scope>
    <source>
        <strain>ATCC 700007 / DSM 6899 / JCM 31910 / BCRC 17059 / LMG 24140 / F1</strain>
    </source>
</reference>
<proteinExistence type="inferred from homology"/>
<dbReference type="EMBL" id="CP000712">
    <property type="protein sequence ID" value="ABQ81310.1"/>
    <property type="molecule type" value="Genomic_DNA"/>
</dbReference>
<dbReference type="SMR" id="A5WB00"/>
<dbReference type="KEGG" id="ppf:Pput_5192"/>
<dbReference type="eggNOG" id="COG0227">
    <property type="taxonomic scope" value="Bacteria"/>
</dbReference>
<dbReference type="HOGENOM" id="CLU_064548_3_1_6"/>
<dbReference type="GO" id="GO:0022625">
    <property type="term" value="C:cytosolic large ribosomal subunit"/>
    <property type="evidence" value="ECO:0007669"/>
    <property type="project" value="TreeGrafter"/>
</dbReference>
<dbReference type="GO" id="GO:0003735">
    <property type="term" value="F:structural constituent of ribosome"/>
    <property type="evidence" value="ECO:0007669"/>
    <property type="project" value="InterPro"/>
</dbReference>
<dbReference type="GO" id="GO:0006412">
    <property type="term" value="P:translation"/>
    <property type="evidence" value="ECO:0007669"/>
    <property type="project" value="UniProtKB-UniRule"/>
</dbReference>
<dbReference type="FunFam" id="2.30.170.40:FF:000001">
    <property type="entry name" value="50S ribosomal protein L28"/>
    <property type="match status" value="1"/>
</dbReference>
<dbReference type="Gene3D" id="2.30.170.40">
    <property type="entry name" value="Ribosomal protein L28/L24"/>
    <property type="match status" value="1"/>
</dbReference>
<dbReference type="HAMAP" id="MF_00373">
    <property type="entry name" value="Ribosomal_bL28"/>
    <property type="match status" value="1"/>
</dbReference>
<dbReference type="InterPro" id="IPR026569">
    <property type="entry name" value="Ribosomal_bL28"/>
</dbReference>
<dbReference type="InterPro" id="IPR034704">
    <property type="entry name" value="Ribosomal_bL28/bL31-like_sf"/>
</dbReference>
<dbReference type="InterPro" id="IPR001383">
    <property type="entry name" value="Ribosomal_bL28_bact-type"/>
</dbReference>
<dbReference type="InterPro" id="IPR037147">
    <property type="entry name" value="Ribosomal_bL28_sf"/>
</dbReference>
<dbReference type="NCBIfam" id="TIGR00009">
    <property type="entry name" value="L28"/>
    <property type="match status" value="1"/>
</dbReference>
<dbReference type="PANTHER" id="PTHR13528">
    <property type="entry name" value="39S RIBOSOMAL PROTEIN L28, MITOCHONDRIAL"/>
    <property type="match status" value="1"/>
</dbReference>
<dbReference type="PANTHER" id="PTHR13528:SF2">
    <property type="entry name" value="LARGE RIBOSOMAL SUBUNIT PROTEIN BL28M"/>
    <property type="match status" value="1"/>
</dbReference>
<dbReference type="Pfam" id="PF00830">
    <property type="entry name" value="Ribosomal_L28"/>
    <property type="match status" value="1"/>
</dbReference>
<dbReference type="SUPFAM" id="SSF143800">
    <property type="entry name" value="L28p-like"/>
    <property type="match status" value="1"/>
</dbReference>
<sequence length="78" mass="8922">MSRVCQVTGKGPVTGNNISHANNKTRRRFLPNLQHHRFWVESEKRFVRLRVSAKGMRIIDKRGIDAVLVDIRKAGAKV</sequence>
<feature type="chain" id="PRO_1000007316" description="Large ribosomal subunit protein bL28">
    <location>
        <begin position="1"/>
        <end position="78"/>
    </location>
</feature>
<feature type="region of interest" description="Disordered" evidence="2">
    <location>
        <begin position="1"/>
        <end position="20"/>
    </location>
</feature>
<accession>A5WB00</accession>
<gene>
    <name evidence="1" type="primary">rpmB</name>
    <name type="ordered locus">Pput_5192</name>
</gene>
<comment type="similarity">
    <text evidence="1">Belongs to the bacterial ribosomal protein bL28 family.</text>
</comment>